<keyword id="KW-0378">Hydrolase</keyword>
<keyword id="KW-0460">Magnesium</keyword>
<keyword id="KW-0511">Multifunctional enzyme</keyword>
<keyword id="KW-0548">Nucleotidyltransferase</keyword>
<keyword id="KW-0677">Repeat</keyword>
<keyword id="KW-0808">Transferase</keyword>
<accession>B4TXR9</accession>
<feature type="chain" id="PRO_1000114766" description="Bifunctional uridylyltransferase/uridylyl-removing enzyme">
    <location>
        <begin position="1"/>
        <end position="890"/>
    </location>
</feature>
<feature type="domain" description="HD" evidence="2">
    <location>
        <begin position="468"/>
        <end position="590"/>
    </location>
</feature>
<feature type="domain" description="ACT 1" evidence="1">
    <location>
        <begin position="709"/>
        <end position="784"/>
    </location>
</feature>
<feature type="domain" description="ACT 2" evidence="1">
    <location>
        <begin position="816"/>
        <end position="890"/>
    </location>
</feature>
<feature type="region of interest" description="Uridylyltransferase">
    <location>
        <begin position="1"/>
        <end position="349"/>
    </location>
</feature>
<feature type="region of interest" description="Disordered" evidence="3">
    <location>
        <begin position="1"/>
        <end position="21"/>
    </location>
</feature>
<feature type="region of interest" description="Uridylyl-removing">
    <location>
        <begin position="350"/>
        <end position="708"/>
    </location>
</feature>
<sequence>MNTLPEQHANTALPTLPDQPQNPGVWPRAELTVAGIKARIDIFQHWLGEAFDSGICAEQLIEARTEFIDQLLQRLWIEAGFGQIADLALVAVGGYGRGELHPLSDIDLLILSRKKLPDEQAQKVGELLTLLWDVKLDVGHSVRTLEECLLEGLSDLTVATNLIETRLLIGDVALFLALQKHIFSEGFWPSDKFYAAKVEEQNQRHQRYHGTSYNLEPDIKSSPGGLRDIHTLQWVARRHFGATSLDEMVGFGFLTPAERAELNECLHILWRIRFALHLVVSRYDNRLLFDRQLSVAQRLNYSGEGNDPVERMMKDYFRVTRRVSELNQMLLQLFDEAILALPADEKPRPVDDEFQLRGTLIDLRDDTLFIREPQAILRMFYMMVRNSAITGIYSTTLRHLRHARRHLSQPLCYIPEARTLFLSMLRHPGAVSRGLLPMHRHSVLWAYMPQWSLIVGQMQFDLFHAYTVDEHTIRVMLKLESFAKEETRQRHPLCVDLWPRLPHPELILIAALFHDIAKGRGGDHSVLGAQDVLTFAELHGLNSRETQLVAWLVRQHLLMSVTAQRRDIQDPEVIKQFAEEVQTETRLRFLVCLTVADICATNETLWNSWKQSLLRELYFATEKQLRRGMQNTPDMRERVRHHQLQALALLRMDNIDEAALHKIWTRCRANYFVRHSPNQLAWHARHLLQHDLSQPLVLLSPQATRGGTEIFIWSPDRPYLFAAVCAELDRRNLSVHDAQIFTTRDGMAMDTFIVLEPDGSPLAADRHDVIRTGLEQTITQRSWQPPQPRRQPAKLRHFTVETEVNFLPTHTDRKSFMELIALDQPGLLARVGQIFADLGISLHGARITTIGERVEDLFIIATADRRALNNVLQLEVQQRLTAALNPNDKG</sequence>
<reference key="1">
    <citation type="journal article" date="2011" name="J. Bacteriol.">
        <title>Comparative genomics of 28 Salmonella enterica isolates: evidence for CRISPR-mediated adaptive sublineage evolution.</title>
        <authorList>
            <person name="Fricke W.F."/>
            <person name="Mammel M.K."/>
            <person name="McDermott P.F."/>
            <person name="Tartera C."/>
            <person name="White D.G."/>
            <person name="Leclerc J.E."/>
            <person name="Ravel J."/>
            <person name="Cebula T.A."/>
        </authorList>
    </citation>
    <scope>NUCLEOTIDE SEQUENCE [LARGE SCALE GENOMIC DNA]</scope>
    <source>
        <strain>CVM19633</strain>
    </source>
</reference>
<organism>
    <name type="scientific">Salmonella schwarzengrund (strain CVM19633)</name>
    <dbReference type="NCBI Taxonomy" id="439843"/>
    <lineage>
        <taxon>Bacteria</taxon>
        <taxon>Pseudomonadati</taxon>
        <taxon>Pseudomonadota</taxon>
        <taxon>Gammaproteobacteria</taxon>
        <taxon>Enterobacterales</taxon>
        <taxon>Enterobacteriaceae</taxon>
        <taxon>Salmonella</taxon>
    </lineage>
</organism>
<name>GLND_SALSV</name>
<comment type="function">
    <text evidence="1">Modifies, by uridylylation and deuridylylation, the PII regulatory proteins (GlnB and homologs), in response to the nitrogen status of the cell that GlnD senses through the glutamine level. Under low glutamine levels, catalyzes the conversion of the PII proteins and UTP to PII-UMP and PPi, while under higher glutamine levels, GlnD hydrolyzes PII-UMP to PII and UMP (deuridylylation). Thus, controls uridylylation state and activity of the PII proteins, and plays an important role in the regulation of nitrogen assimilation and metabolism.</text>
</comment>
<comment type="catalytic activity">
    <reaction evidence="1">
        <text>[protein-PII]-L-tyrosine + UTP = [protein-PII]-uridylyl-L-tyrosine + diphosphate</text>
        <dbReference type="Rhea" id="RHEA:13673"/>
        <dbReference type="Rhea" id="RHEA-COMP:12147"/>
        <dbReference type="Rhea" id="RHEA-COMP:12148"/>
        <dbReference type="ChEBI" id="CHEBI:33019"/>
        <dbReference type="ChEBI" id="CHEBI:46398"/>
        <dbReference type="ChEBI" id="CHEBI:46858"/>
        <dbReference type="ChEBI" id="CHEBI:90602"/>
        <dbReference type="EC" id="2.7.7.59"/>
    </reaction>
</comment>
<comment type="catalytic activity">
    <reaction evidence="1">
        <text>[protein-PII]-uridylyl-L-tyrosine + H2O = [protein-PII]-L-tyrosine + UMP + H(+)</text>
        <dbReference type="Rhea" id="RHEA:48600"/>
        <dbReference type="Rhea" id="RHEA-COMP:12147"/>
        <dbReference type="Rhea" id="RHEA-COMP:12148"/>
        <dbReference type="ChEBI" id="CHEBI:15377"/>
        <dbReference type="ChEBI" id="CHEBI:15378"/>
        <dbReference type="ChEBI" id="CHEBI:46858"/>
        <dbReference type="ChEBI" id="CHEBI:57865"/>
        <dbReference type="ChEBI" id="CHEBI:90602"/>
    </reaction>
</comment>
<comment type="cofactor">
    <cofactor evidence="1">
        <name>Mg(2+)</name>
        <dbReference type="ChEBI" id="CHEBI:18420"/>
    </cofactor>
</comment>
<comment type="activity regulation">
    <text evidence="1">Uridylyltransferase (UTase) activity is inhibited by glutamine, while glutamine activates uridylyl-removing (UR) activity.</text>
</comment>
<comment type="domain">
    <text evidence="1">Has four distinct domains: an N-terminal nucleotidyltransferase (NT) domain responsible for UTase activity, a central HD domain that encodes UR activity, and two C-terminal ACT domains that seem to have a role in glutamine sensing.</text>
</comment>
<comment type="similarity">
    <text evidence="1">Belongs to the GlnD family.</text>
</comment>
<proteinExistence type="inferred from homology"/>
<dbReference type="EC" id="2.7.7.59" evidence="1"/>
<dbReference type="EC" id="3.1.4.-" evidence="1"/>
<dbReference type="EMBL" id="CP001127">
    <property type="protein sequence ID" value="ACF91506.1"/>
    <property type="molecule type" value="Genomic_DNA"/>
</dbReference>
<dbReference type="RefSeq" id="WP_001094525.1">
    <property type="nucleotide sequence ID" value="NC_011094.1"/>
</dbReference>
<dbReference type="SMR" id="B4TXR9"/>
<dbReference type="KEGG" id="sew:SeSA_A0238"/>
<dbReference type="HOGENOM" id="CLU_012833_0_0_6"/>
<dbReference type="Proteomes" id="UP000001865">
    <property type="component" value="Chromosome"/>
</dbReference>
<dbReference type="GO" id="GO:0008773">
    <property type="term" value="F:[protein-PII] uridylyltransferase activity"/>
    <property type="evidence" value="ECO:0007669"/>
    <property type="project" value="UniProtKB-UniRule"/>
</dbReference>
<dbReference type="GO" id="GO:0008081">
    <property type="term" value="F:phosphoric diester hydrolase activity"/>
    <property type="evidence" value="ECO:0007669"/>
    <property type="project" value="UniProtKB-UniRule"/>
</dbReference>
<dbReference type="GO" id="GO:0006808">
    <property type="term" value="P:regulation of nitrogen utilization"/>
    <property type="evidence" value="ECO:0007669"/>
    <property type="project" value="UniProtKB-UniRule"/>
</dbReference>
<dbReference type="CDD" id="cd04899">
    <property type="entry name" value="ACT_ACR-UUR-like_2"/>
    <property type="match status" value="1"/>
</dbReference>
<dbReference type="CDD" id="cd04900">
    <property type="entry name" value="ACT_UUR-like_1"/>
    <property type="match status" value="1"/>
</dbReference>
<dbReference type="CDD" id="cd00077">
    <property type="entry name" value="HDc"/>
    <property type="match status" value="1"/>
</dbReference>
<dbReference type="CDD" id="cd05401">
    <property type="entry name" value="NT_GlnE_GlnD_like"/>
    <property type="match status" value="1"/>
</dbReference>
<dbReference type="FunFam" id="1.10.3210.10:FF:000005">
    <property type="entry name" value="Bifunctional uridylyltransferase/uridylyl-removing enzyme"/>
    <property type="match status" value="1"/>
</dbReference>
<dbReference type="Gene3D" id="1.10.3210.10">
    <property type="entry name" value="Hypothetical protein af1432"/>
    <property type="match status" value="1"/>
</dbReference>
<dbReference type="Gene3D" id="1.20.120.330">
    <property type="entry name" value="Nucleotidyltransferases domain 2"/>
    <property type="match status" value="1"/>
</dbReference>
<dbReference type="HAMAP" id="MF_00277">
    <property type="entry name" value="PII_uridylyl_transf"/>
    <property type="match status" value="1"/>
</dbReference>
<dbReference type="InterPro" id="IPR045865">
    <property type="entry name" value="ACT-like_dom_sf"/>
</dbReference>
<dbReference type="InterPro" id="IPR002912">
    <property type="entry name" value="ACT_dom"/>
</dbReference>
<dbReference type="InterPro" id="IPR003607">
    <property type="entry name" value="HD/PDEase_dom"/>
</dbReference>
<dbReference type="InterPro" id="IPR006674">
    <property type="entry name" value="HD_domain"/>
</dbReference>
<dbReference type="InterPro" id="IPR043519">
    <property type="entry name" value="NT_sf"/>
</dbReference>
<dbReference type="InterPro" id="IPR013546">
    <property type="entry name" value="PII_UdlTrfase/GS_AdlTrfase"/>
</dbReference>
<dbReference type="InterPro" id="IPR002934">
    <property type="entry name" value="Polymerase_NTP_transf_dom"/>
</dbReference>
<dbReference type="InterPro" id="IPR010043">
    <property type="entry name" value="UTase/UR"/>
</dbReference>
<dbReference type="NCBIfam" id="NF002487">
    <property type="entry name" value="PRK01759.1"/>
    <property type="match status" value="1"/>
</dbReference>
<dbReference type="NCBIfam" id="NF003448">
    <property type="entry name" value="PRK05007.1"/>
    <property type="match status" value="1"/>
</dbReference>
<dbReference type="NCBIfam" id="TIGR01693">
    <property type="entry name" value="UTase_glnD"/>
    <property type="match status" value="1"/>
</dbReference>
<dbReference type="PANTHER" id="PTHR47320">
    <property type="entry name" value="BIFUNCTIONAL URIDYLYLTRANSFERASE/URIDYLYL-REMOVING ENZYME"/>
    <property type="match status" value="1"/>
</dbReference>
<dbReference type="PANTHER" id="PTHR47320:SF1">
    <property type="entry name" value="BIFUNCTIONAL URIDYLYLTRANSFERASE_URIDYLYL-REMOVING ENZYME"/>
    <property type="match status" value="1"/>
</dbReference>
<dbReference type="Pfam" id="PF01842">
    <property type="entry name" value="ACT"/>
    <property type="match status" value="2"/>
</dbReference>
<dbReference type="Pfam" id="PF08335">
    <property type="entry name" value="GlnD_UR_UTase"/>
    <property type="match status" value="1"/>
</dbReference>
<dbReference type="Pfam" id="PF01966">
    <property type="entry name" value="HD"/>
    <property type="match status" value="1"/>
</dbReference>
<dbReference type="Pfam" id="PF01909">
    <property type="entry name" value="NTP_transf_2"/>
    <property type="match status" value="1"/>
</dbReference>
<dbReference type="PIRSF" id="PIRSF006288">
    <property type="entry name" value="PII_uridyltransf"/>
    <property type="match status" value="1"/>
</dbReference>
<dbReference type="SMART" id="SM00471">
    <property type="entry name" value="HDc"/>
    <property type="match status" value="1"/>
</dbReference>
<dbReference type="SUPFAM" id="SSF55021">
    <property type="entry name" value="ACT-like"/>
    <property type="match status" value="2"/>
</dbReference>
<dbReference type="SUPFAM" id="SSF109604">
    <property type="entry name" value="HD-domain/PDEase-like"/>
    <property type="match status" value="1"/>
</dbReference>
<dbReference type="SUPFAM" id="SSF81301">
    <property type="entry name" value="Nucleotidyltransferase"/>
    <property type="match status" value="1"/>
</dbReference>
<dbReference type="SUPFAM" id="SSF81593">
    <property type="entry name" value="Nucleotidyltransferase substrate binding subunit/domain"/>
    <property type="match status" value="1"/>
</dbReference>
<dbReference type="PROSITE" id="PS51671">
    <property type="entry name" value="ACT"/>
    <property type="match status" value="2"/>
</dbReference>
<dbReference type="PROSITE" id="PS51831">
    <property type="entry name" value="HD"/>
    <property type="match status" value="1"/>
</dbReference>
<protein>
    <recommendedName>
        <fullName evidence="1">Bifunctional uridylyltransferase/uridylyl-removing enzyme</fullName>
        <shortName evidence="1">UTase/UR</shortName>
    </recommendedName>
    <alternativeName>
        <fullName evidence="1">Bifunctional [protein-PII] modification enzyme</fullName>
    </alternativeName>
    <alternativeName>
        <fullName evidence="1">Bifunctional nitrogen sensor protein</fullName>
    </alternativeName>
    <domain>
        <recommendedName>
            <fullName evidence="1">[Protein-PII] uridylyltransferase</fullName>
            <shortName evidence="1">PII uridylyltransferase</shortName>
            <shortName evidence="1">UTase</shortName>
            <ecNumber evidence="1">2.7.7.59</ecNumber>
        </recommendedName>
    </domain>
    <domain>
        <recommendedName>
            <fullName evidence="1">[Protein-PII]-UMP uridylyl-removing enzyme</fullName>
            <shortName evidence="1">UR</shortName>
            <ecNumber evidence="1">3.1.4.-</ecNumber>
        </recommendedName>
    </domain>
</protein>
<gene>
    <name evidence="1" type="primary">glnD</name>
    <name type="ordered locus">SeSA_A0238</name>
</gene>
<evidence type="ECO:0000255" key="1">
    <source>
        <dbReference type="HAMAP-Rule" id="MF_00277"/>
    </source>
</evidence>
<evidence type="ECO:0000255" key="2">
    <source>
        <dbReference type="PROSITE-ProRule" id="PRU01175"/>
    </source>
</evidence>
<evidence type="ECO:0000256" key="3">
    <source>
        <dbReference type="SAM" id="MobiDB-lite"/>
    </source>
</evidence>